<reference key="1">
    <citation type="journal article" date="2005" name="Nature">
        <title>The genome of the social amoeba Dictyostelium discoideum.</title>
        <authorList>
            <person name="Eichinger L."/>
            <person name="Pachebat J.A."/>
            <person name="Gloeckner G."/>
            <person name="Rajandream M.A."/>
            <person name="Sucgang R."/>
            <person name="Berriman M."/>
            <person name="Song J."/>
            <person name="Olsen R."/>
            <person name="Szafranski K."/>
            <person name="Xu Q."/>
            <person name="Tunggal B."/>
            <person name="Kummerfeld S."/>
            <person name="Madera M."/>
            <person name="Konfortov B.A."/>
            <person name="Rivero F."/>
            <person name="Bankier A.T."/>
            <person name="Lehmann R."/>
            <person name="Hamlin N."/>
            <person name="Davies R."/>
            <person name="Gaudet P."/>
            <person name="Fey P."/>
            <person name="Pilcher K."/>
            <person name="Chen G."/>
            <person name="Saunders D."/>
            <person name="Sodergren E.J."/>
            <person name="Davis P."/>
            <person name="Kerhornou A."/>
            <person name="Nie X."/>
            <person name="Hall N."/>
            <person name="Anjard C."/>
            <person name="Hemphill L."/>
            <person name="Bason N."/>
            <person name="Farbrother P."/>
            <person name="Desany B."/>
            <person name="Just E."/>
            <person name="Morio T."/>
            <person name="Rost R."/>
            <person name="Churcher C.M."/>
            <person name="Cooper J."/>
            <person name="Haydock S."/>
            <person name="van Driessche N."/>
            <person name="Cronin A."/>
            <person name="Goodhead I."/>
            <person name="Muzny D.M."/>
            <person name="Mourier T."/>
            <person name="Pain A."/>
            <person name="Lu M."/>
            <person name="Harper D."/>
            <person name="Lindsay R."/>
            <person name="Hauser H."/>
            <person name="James K.D."/>
            <person name="Quiles M."/>
            <person name="Madan Babu M."/>
            <person name="Saito T."/>
            <person name="Buchrieser C."/>
            <person name="Wardroper A."/>
            <person name="Felder M."/>
            <person name="Thangavelu M."/>
            <person name="Johnson D."/>
            <person name="Knights A."/>
            <person name="Loulseged H."/>
            <person name="Mungall K.L."/>
            <person name="Oliver K."/>
            <person name="Price C."/>
            <person name="Quail M.A."/>
            <person name="Urushihara H."/>
            <person name="Hernandez J."/>
            <person name="Rabbinowitsch E."/>
            <person name="Steffen D."/>
            <person name="Sanders M."/>
            <person name="Ma J."/>
            <person name="Kohara Y."/>
            <person name="Sharp S."/>
            <person name="Simmonds M.N."/>
            <person name="Spiegler S."/>
            <person name="Tivey A."/>
            <person name="Sugano S."/>
            <person name="White B."/>
            <person name="Walker D."/>
            <person name="Woodward J.R."/>
            <person name="Winckler T."/>
            <person name="Tanaka Y."/>
            <person name="Shaulsky G."/>
            <person name="Schleicher M."/>
            <person name="Weinstock G.M."/>
            <person name="Rosenthal A."/>
            <person name="Cox E.C."/>
            <person name="Chisholm R.L."/>
            <person name="Gibbs R.A."/>
            <person name="Loomis W.F."/>
            <person name="Platzer M."/>
            <person name="Kay R.R."/>
            <person name="Williams J.G."/>
            <person name="Dear P.H."/>
            <person name="Noegel A.A."/>
            <person name="Barrell B.G."/>
            <person name="Kuspa A."/>
        </authorList>
    </citation>
    <scope>NUCLEOTIDE SEQUENCE [LARGE SCALE GENOMIC DNA]</scope>
    <source>
        <strain>AX4</strain>
    </source>
</reference>
<name>SRFD_DICDI</name>
<sequence>MGRKKIKIQRIPDERNRQVTFNKRKNGLIKKAMELALLCDSTVSLVIVNNSPNAKEKYFQYISSGLPSPMESIPDLGPEISQKFTDHDYDKIFNKKEKGDFNDDYIGGDTASHSEEEDHKSPSSTPELLGYNHHNHHHHHHQYNNNSNNNNNNHNNNHNNYNNSNNINGHNNHYNHNNLKLNSNNNNNNSQFNSSQHINKPILSIKPSQTQENHNHYNNYSSHLSNNNNNNNSSNNNNNSNNNNNNNNNNNTNNNNTNNNNNNNNNNNNNNNNNNNNNNNNNMSPIGSPPSKCQQVPAFDSTQATQALLSLHNASKLFCSSPEDTSPMTSPRTPPFSSTNTNTLQTSPNSQQKSKSLPPLIFNENNNQNNNNQNNNQNNNNNNSNNTNTNNNNQNNSSRSILLPPISLYNSNSNSNSSSTLTSPTSSSSNLNDDLFLKKRKLELIH</sequence>
<proteinExistence type="inferred from homology"/>
<comment type="subcellular location">
    <subcellularLocation>
        <location evidence="1">Nucleus</location>
    </subcellularLocation>
</comment>
<organism>
    <name type="scientific">Dictyostelium discoideum</name>
    <name type="common">Social amoeba</name>
    <dbReference type="NCBI Taxonomy" id="44689"/>
    <lineage>
        <taxon>Eukaryota</taxon>
        <taxon>Amoebozoa</taxon>
        <taxon>Evosea</taxon>
        <taxon>Eumycetozoa</taxon>
        <taxon>Dictyostelia</taxon>
        <taxon>Dictyosteliales</taxon>
        <taxon>Dictyosteliaceae</taxon>
        <taxon>Dictyostelium</taxon>
    </lineage>
</organism>
<feature type="chain" id="PRO_0000389012" description="Serum factor response D">
    <location>
        <begin position="1"/>
        <end position="446"/>
    </location>
</feature>
<feature type="domain" description="MADS-box" evidence="1">
    <location>
        <begin position="1"/>
        <end position="61"/>
    </location>
</feature>
<feature type="region of interest" description="Disordered" evidence="2">
    <location>
        <begin position="95"/>
        <end position="195"/>
    </location>
</feature>
<feature type="region of interest" description="Disordered" evidence="2">
    <location>
        <begin position="210"/>
        <end position="296"/>
    </location>
</feature>
<feature type="region of interest" description="Disordered" evidence="2">
    <location>
        <begin position="319"/>
        <end position="432"/>
    </location>
</feature>
<feature type="compositionally biased region" description="Basic and acidic residues" evidence="2">
    <location>
        <begin position="112"/>
        <end position="121"/>
    </location>
</feature>
<feature type="compositionally biased region" description="Basic residues" evidence="2">
    <location>
        <begin position="133"/>
        <end position="142"/>
    </location>
</feature>
<feature type="compositionally biased region" description="Low complexity" evidence="2">
    <location>
        <begin position="143"/>
        <end position="195"/>
    </location>
</feature>
<feature type="compositionally biased region" description="Low complexity" evidence="2">
    <location>
        <begin position="216"/>
        <end position="282"/>
    </location>
</feature>
<feature type="compositionally biased region" description="Polar residues" evidence="2">
    <location>
        <begin position="322"/>
        <end position="355"/>
    </location>
</feature>
<feature type="compositionally biased region" description="Low complexity" evidence="2">
    <location>
        <begin position="365"/>
        <end position="432"/>
    </location>
</feature>
<dbReference type="EMBL" id="AAFI02000055">
    <property type="protein sequence ID" value="EAL65726.1"/>
    <property type="molecule type" value="Genomic_DNA"/>
</dbReference>
<dbReference type="RefSeq" id="XP_639104.1">
    <property type="nucleotide sequence ID" value="XM_634012.1"/>
</dbReference>
<dbReference type="SMR" id="Q54QY7"/>
<dbReference type="FunCoup" id="Q54QY7">
    <property type="interactions" value="877"/>
</dbReference>
<dbReference type="STRING" id="44689.Q54QY7"/>
<dbReference type="PaxDb" id="44689-DDB0220493"/>
<dbReference type="EnsemblProtists" id="EAL65726">
    <property type="protein sequence ID" value="EAL65726"/>
    <property type="gene ID" value="DDB_G0283483"/>
</dbReference>
<dbReference type="GeneID" id="8624128"/>
<dbReference type="KEGG" id="ddi:DDB_G0283483"/>
<dbReference type="dictyBase" id="DDB_G0283483">
    <property type="gene designation" value="srfD"/>
</dbReference>
<dbReference type="VEuPathDB" id="AmoebaDB:DDB_G0283483"/>
<dbReference type="eggNOG" id="KOG0014">
    <property type="taxonomic scope" value="Eukaryota"/>
</dbReference>
<dbReference type="HOGENOM" id="CLU_614570_0_0_1"/>
<dbReference type="InParanoid" id="Q54QY7"/>
<dbReference type="OMA" id="KRKCINE"/>
<dbReference type="Reactome" id="R-DDI-525793">
    <property type="pathway name" value="Myogenesis"/>
</dbReference>
<dbReference type="PRO" id="PR:Q54QY7"/>
<dbReference type="Proteomes" id="UP000002195">
    <property type="component" value="Chromosome 4"/>
</dbReference>
<dbReference type="GO" id="GO:0005634">
    <property type="term" value="C:nucleus"/>
    <property type="evidence" value="ECO:0007669"/>
    <property type="project" value="UniProtKB-SubCell"/>
</dbReference>
<dbReference type="GO" id="GO:0000981">
    <property type="term" value="F:DNA-binding transcription factor activity, RNA polymerase II-specific"/>
    <property type="evidence" value="ECO:0000318"/>
    <property type="project" value="GO_Central"/>
</dbReference>
<dbReference type="GO" id="GO:0046983">
    <property type="term" value="F:protein dimerization activity"/>
    <property type="evidence" value="ECO:0007669"/>
    <property type="project" value="InterPro"/>
</dbReference>
<dbReference type="GO" id="GO:0000978">
    <property type="term" value="F:RNA polymerase II cis-regulatory region sequence-specific DNA binding"/>
    <property type="evidence" value="ECO:0000318"/>
    <property type="project" value="GO_Central"/>
</dbReference>
<dbReference type="GO" id="GO:0045944">
    <property type="term" value="P:positive regulation of transcription by RNA polymerase II"/>
    <property type="evidence" value="ECO:0000318"/>
    <property type="project" value="GO_Central"/>
</dbReference>
<dbReference type="CDD" id="cd00120">
    <property type="entry name" value="MADS"/>
    <property type="match status" value="1"/>
</dbReference>
<dbReference type="Gene3D" id="3.40.1810.10">
    <property type="entry name" value="Transcription factor, MADS-box"/>
    <property type="match status" value="1"/>
</dbReference>
<dbReference type="InterPro" id="IPR002100">
    <property type="entry name" value="TF_MADSbox"/>
</dbReference>
<dbReference type="InterPro" id="IPR036879">
    <property type="entry name" value="TF_MADSbox_sf"/>
</dbReference>
<dbReference type="Pfam" id="PF00319">
    <property type="entry name" value="SRF-TF"/>
    <property type="match status" value="1"/>
</dbReference>
<dbReference type="PRINTS" id="PR00404">
    <property type="entry name" value="MADSDOMAIN"/>
</dbReference>
<dbReference type="SMART" id="SM00432">
    <property type="entry name" value="MADS"/>
    <property type="match status" value="1"/>
</dbReference>
<dbReference type="SUPFAM" id="SSF55455">
    <property type="entry name" value="SRF-like"/>
    <property type="match status" value="1"/>
</dbReference>
<dbReference type="PROSITE" id="PS50066">
    <property type="entry name" value="MADS_BOX_2"/>
    <property type="match status" value="1"/>
</dbReference>
<gene>
    <name type="primary">srfD</name>
    <name type="ORF">DDB_G0283483</name>
</gene>
<keyword id="KW-0238">DNA-binding</keyword>
<keyword id="KW-0539">Nucleus</keyword>
<keyword id="KW-1185">Reference proteome</keyword>
<keyword id="KW-0804">Transcription</keyword>
<keyword id="KW-0805">Transcription regulation</keyword>
<evidence type="ECO:0000255" key="1">
    <source>
        <dbReference type="PROSITE-ProRule" id="PRU00251"/>
    </source>
</evidence>
<evidence type="ECO:0000256" key="2">
    <source>
        <dbReference type="SAM" id="MobiDB-lite"/>
    </source>
</evidence>
<accession>Q54QY7</accession>
<protein>
    <recommendedName>
        <fullName>Serum factor response D</fullName>
    </recommendedName>
</protein>